<accession>Q7CG47</accession>
<accession>Q74PW1</accession>
<comment type="function">
    <text evidence="1">Involved in the degradation of phospho-AI-2, thereby terminating induction of the lsr operon and closing the AI-2 signaling cycle. Catalyzes the transfer of an acetyl moiety from 3-hydroxy-5-phosphonooxypentane-2,4-dione to CoA to form glycerone phosphate and acetyl-CoA.</text>
</comment>
<comment type="catalytic activity">
    <reaction evidence="1">
        <text>dihydroxyacetone phosphate + acetyl-CoA = 3-hydroxy-2,4-dioxopentyl phosphate + CoA</text>
        <dbReference type="Rhea" id="RHEA:44736"/>
        <dbReference type="ChEBI" id="CHEBI:57287"/>
        <dbReference type="ChEBI" id="CHEBI:57288"/>
        <dbReference type="ChEBI" id="CHEBI:57642"/>
        <dbReference type="ChEBI" id="CHEBI:84359"/>
        <dbReference type="EC" id="2.3.1.245"/>
    </reaction>
</comment>
<comment type="subunit">
    <text evidence="1">Homodecamer.</text>
</comment>
<comment type="subcellular location">
    <subcellularLocation>
        <location evidence="1">Cytoplasm</location>
    </subcellularLocation>
</comment>
<comment type="similarity">
    <text evidence="1">Belongs to the DeoC/FbaB aldolase family.</text>
</comment>
<name>LSRF_YERPE</name>
<gene>
    <name evidence="1" type="primary">lsrF</name>
    <name type="ordered locus">YPO0408</name>
    <name type="ordered locus">y3773</name>
    <name type="ordered locus">YP_3773</name>
</gene>
<reference key="1">
    <citation type="journal article" date="2001" name="Nature">
        <title>Genome sequence of Yersinia pestis, the causative agent of plague.</title>
        <authorList>
            <person name="Parkhill J."/>
            <person name="Wren B.W."/>
            <person name="Thomson N.R."/>
            <person name="Titball R.W."/>
            <person name="Holden M.T.G."/>
            <person name="Prentice M.B."/>
            <person name="Sebaihia M."/>
            <person name="James K.D."/>
            <person name="Churcher C.M."/>
            <person name="Mungall K.L."/>
            <person name="Baker S."/>
            <person name="Basham D."/>
            <person name="Bentley S.D."/>
            <person name="Brooks K."/>
            <person name="Cerdeno-Tarraga A.-M."/>
            <person name="Chillingworth T."/>
            <person name="Cronin A."/>
            <person name="Davies R.M."/>
            <person name="Davis P."/>
            <person name="Dougan G."/>
            <person name="Feltwell T."/>
            <person name="Hamlin N."/>
            <person name="Holroyd S."/>
            <person name="Jagels K."/>
            <person name="Karlyshev A.V."/>
            <person name="Leather S."/>
            <person name="Moule S."/>
            <person name="Oyston P.C.F."/>
            <person name="Quail M.A."/>
            <person name="Rutherford K.M."/>
            <person name="Simmonds M."/>
            <person name="Skelton J."/>
            <person name="Stevens K."/>
            <person name="Whitehead S."/>
            <person name="Barrell B.G."/>
        </authorList>
    </citation>
    <scope>NUCLEOTIDE SEQUENCE [LARGE SCALE GENOMIC DNA]</scope>
    <source>
        <strain>CO-92 / Biovar Orientalis</strain>
    </source>
</reference>
<reference key="2">
    <citation type="journal article" date="2002" name="J. Bacteriol.">
        <title>Genome sequence of Yersinia pestis KIM.</title>
        <authorList>
            <person name="Deng W."/>
            <person name="Burland V."/>
            <person name="Plunkett G. III"/>
            <person name="Boutin A."/>
            <person name="Mayhew G.F."/>
            <person name="Liss P."/>
            <person name="Perna N.T."/>
            <person name="Rose D.J."/>
            <person name="Mau B."/>
            <person name="Zhou S."/>
            <person name="Schwartz D.C."/>
            <person name="Fetherston J.D."/>
            <person name="Lindler L.E."/>
            <person name="Brubaker R.R."/>
            <person name="Plano G.V."/>
            <person name="Straley S.C."/>
            <person name="McDonough K.A."/>
            <person name="Nilles M.L."/>
            <person name="Matson J.S."/>
            <person name="Blattner F.R."/>
            <person name="Perry R.D."/>
        </authorList>
    </citation>
    <scope>NUCLEOTIDE SEQUENCE [LARGE SCALE GENOMIC DNA]</scope>
    <source>
        <strain>KIM10+ / Biovar Mediaevalis</strain>
    </source>
</reference>
<reference key="3">
    <citation type="journal article" date="2004" name="DNA Res.">
        <title>Complete genome sequence of Yersinia pestis strain 91001, an isolate avirulent to humans.</title>
        <authorList>
            <person name="Song Y."/>
            <person name="Tong Z."/>
            <person name="Wang J."/>
            <person name="Wang L."/>
            <person name="Guo Z."/>
            <person name="Han Y."/>
            <person name="Zhang J."/>
            <person name="Pei D."/>
            <person name="Zhou D."/>
            <person name="Qin H."/>
            <person name="Pang X."/>
            <person name="Han Y."/>
            <person name="Zhai J."/>
            <person name="Li M."/>
            <person name="Cui B."/>
            <person name="Qi Z."/>
            <person name="Jin L."/>
            <person name="Dai R."/>
            <person name="Chen F."/>
            <person name="Li S."/>
            <person name="Ye C."/>
            <person name="Du Z."/>
            <person name="Lin W."/>
            <person name="Wang J."/>
            <person name="Yu J."/>
            <person name="Yang H."/>
            <person name="Wang J."/>
            <person name="Huang P."/>
            <person name="Yang R."/>
        </authorList>
    </citation>
    <scope>NUCLEOTIDE SEQUENCE [LARGE SCALE GENOMIC DNA]</scope>
    <source>
        <strain>91001 / Biovar Mediaevalis</strain>
    </source>
</reference>
<protein>
    <recommendedName>
        <fullName evidence="1">3-hydroxy-5-phosphonooxypentane-2,4-dione thiolase</fullName>
        <ecNumber evidence="1">2.3.1.245</ecNumber>
    </recommendedName>
</protein>
<sequence length="291" mass="31611">MADLDDIKDGKDFGIGIPQQNPAFTLKGSGSLDWGMQSRLARIFNPKTNRTVMLAFDHGYFQGPTTGLERIDINIAPLFEYADVLMCTRGILRSVVPAAANRPVVLRASGANSILTYLSNEAVAVAMEDAVRLNACAVAAQVYIGTEHEHQSIKNIIQLIDQGMRYGMPTMAVTGVGKDMVRDQRYFSLASRIAAEMGAQVIKTYYVDSGFERIAAGCPVPIVIAGGKKLPERDALEMCYQAIDQGASGVDMGRNIFQSDAPIAMLKAVHAIVHKNENAAAAYQLFLHEQN</sequence>
<evidence type="ECO:0000255" key="1">
    <source>
        <dbReference type="HAMAP-Rule" id="MF_02052"/>
    </source>
</evidence>
<organism>
    <name type="scientific">Yersinia pestis</name>
    <dbReference type="NCBI Taxonomy" id="632"/>
    <lineage>
        <taxon>Bacteria</taxon>
        <taxon>Pseudomonadati</taxon>
        <taxon>Pseudomonadota</taxon>
        <taxon>Gammaproteobacteria</taxon>
        <taxon>Enterobacterales</taxon>
        <taxon>Yersiniaceae</taxon>
        <taxon>Yersinia</taxon>
    </lineage>
</organism>
<feature type="chain" id="PRO_0000351534" description="3-hydroxy-5-phosphonooxypentane-2,4-dione thiolase">
    <location>
        <begin position="1"/>
        <end position="291"/>
    </location>
</feature>
<feature type="active site" description="Schiff-base intermediate with substrate" evidence="1">
    <location>
        <position position="203"/>
    </location>
</feature>
<proteinExistence type="inferred from homology"/>
<keyword id="KW-0963">Cytoplasm</keyword>
<keyword id="KW-1185">Reference proteome</keyword>
<keyword id="KW-0704">Schiff base</keyword>
<keyword id="KW-0808">Transferase</keyword>
<dbReference type="EC" id="2.3.1.245" evidence="1"/>
<dbReference type="EMBL" id="AL590842">
    <property type="protein sequence ID" value="CAL19089.1"/>
    <property type="molecule type" value="Genomic_DNA"/>
</dbReference>
<dbReference type="EMBL" id="AE009952">
    <property type="protein sequence ID" value="AAM87318.1"/>
    <property type="molecule type" value="Genomic_DNA"/>
</dbReference>
<dbReference type="EMBL" id="AE017042">
    <property type="protein sequence ID" value="AAS63921.1"/>
    <property type="molecule type" value="Genomic_DNA"/>
</dbReference>
<dbReference type="PIR" id="AG0050">
    <property type="entry name" value="AG0050"/>
</dbReference>
<dbReference type="RefSeq" id="WP_002209188.1">
    <property type="nucleotide sequence ID" value="NZ_WUCM01000002.1"/>
</dbReference>
<dbReference type="RefSeq" id="YP_002345485.1">
    <property type="nucleotide sequence ID" value="NC_003143.1"/>
</dbReference>
<dbReference type="SMR" id="Q7CG47"/>
<dbReference type="STRING" id="214092.YPO0408"/>
<dbReference type="PaxDb" id="214092-YPO0408"/>
<dbReference type="DNASU" id="1148720"/>
<dbReference type="EnsemblBacteria" id="AAS63921">
    <property type="protein sequence ID" value="AAS63921"/>
    <property type="gene ID" value="YP_3773"/>
</dbReference>
<dbReference type="GeneID" id="57974202"/>
<dbReference type="KEGG" id="ype:YPO0408"/>
<dbReference type="KEGG" id="ypk:y3773"/>
<dbReference type="KEGG" id="ypm:YP_3773"/>
<dbReference type="PATRIC" id="fig|214092.21.peg.648"/>
<dbReference type="eggNOG" id="COG1830">
    <property type="taxonomic scope" value="Bacteria"/>
</dbReference>
<dbReference type="HOGENOM" id="CLU_057069_1_0_6"/>
<dbReference type="OMA" id="CEYWGMP"/>
<dbReference type="OrthoDB" id="5915071at2"/>
<dbReference type="Proteomes" id="UP000000815">
    <property type="component" value="Chromosome"/>
</dbReference>
<dbReference type="Proteomes" id="UP000001019">
    <property type="component" value="Chromosome"/>
</dbReference>
<dbReference type="Proteomes" id="UP000002490">
    <property type="component" value="Chromosome"/>
</dbReference>
<dbReference type="GO" id="GO:0005737">
    <property type="term" value="C:cytoplasm"/>
    <property type="evidence" value="ECO:0007669"/>
    <property type="project" value="UniProtKB-SubCell"/>
</dbReference>
<dbReference type="GO" id="GO:0016747">
    <property type="term" value="F:acyltransferase activity, transferring groups other than amino-acyl groups"/>
    <property type="evidence" value="ECO:0000318"/>
    <property type="project" value="GO_Central"/>
</dbReference>
<dbReference type="GO" id="GO:0004332">
    <property type="term" value="F:fructose-bisphosphate aldolase activity"/>
    <property type="evidence" value="ECO:0007669"/>
    <property type="project" value="InterPro"/>
</dbReference>
<dbReference type="CDD" id="cd00958">
    <property type="entry name" value="DhnA"/>
    <property type="match status" value="1"/>
</dbReference>
<dbReference type="Gene3D" id="3.20.20.70">
    <property type="entry name" value="Aldolase class I"/>
    <property type="match status" value="1"/>
</dbReference>
<dbReference type="HAMAP" id="MF_02052">
    <property type="entry name" value="LsrF"/>
    <property type="match status" value="1"/>
</dbReference>
<dbReference type="InterPro" id="IPR013785">
    <property type="entry name" value="Aldolase_TIM"/>
</dbReference>
<dbReference type="InterPro" id="IPR002915">
    <property type="entry name" value="DeoC/FbaB/LacD_aldolase"/>
</dbReference>
<dbReference type="InterPro" id="IPR050456">
    <property type="entry name" value="DeoC/FbaB_aldolase"/>
</dbReference>
<dbReference type="InterPro" id="IPR041720">
    <property type="entry name" value="FbaB-like"/>
</dbReference>
<dbReference type="InterPro" id="IPR033673">
    <property type="entry name" value="LsrF"/>
</dbReference>
<dbReference type="NCBIfam" id="NF006081">
    <property type="entry name" value="PRK08227.1"/>
    <property type="match status" value="1"/>
</dbReference>
<dbReference type="PANTHER" id="PTHR47916:SF1">
    <property type="entry name" value="3-HYDROXY-5-PHOSPHONOOXYPENTANE-2,4-DIONE THIOLASE"/>
    <property type="match status" value="1"/>
</dbReference>
<dbReference type="PANTHER" id="PTHR47916">
    <property type="entry name" value="FRUCTOSE-BISPHOSPHATE ALDOLASE CLASS 1"/>
    <property type="match status" value="1"/>
</dbReference>
<dbReference type="Pfam" id="PF01791">
    <property type="entry name" value="DeoC"/>
    <property type="match status" value="1"/>
</dbReference>
<dbReference type="PIRSF" id="PIRSF038992">
    <property type="entry name" value="Aldolase_Ia"/>
    <property type="match status" value="1"/>
</dbReference>
<dbReference type="SMART" id="SM01133">
    <property type="entry name" value="DeoC"/>
    <property type="match status" value="1"/>
</dbReference>
<dbReference type="SUPFAM" id="SSF51569">
    <property type="entry name" value="Aldolase"/>
    <property type="match status" value="1"/>
</dbReference>